<accession>B4TU43</accession>
<dbReference type="EC" id="5.4.2.7" evidence="1"/>
<dbReference type="EMBL" id="CP001127">
    <property type="protein sequence ID" value="ACF89724.1"/>
    <property type="molecule type" value="Genomic_DNA"/>
</dbReference>
<dbReference type="RefSeq" id="WP_000816454.1">
    <property type="nucleotide sequence ID" value="NC_011094.1"/>
</dbReference>
<dbReference type="SMR" id="B4TU43"/>
<dbReference type="KEGG" id="sew:SeSA_A4823"/>
<dbReference type="HOGENOM" id="CLU_053861_0_0_6"/>
<dbReference type="UniPathway" id="UPA00002">
    <property type="reaction ID" value="UER00467"/>
</dbReference>
<dbReference type="Proteomes" id="UP000001865">
    <property type="component" value="Chromosome"/>
</dbReference>
<dbReference type="GO" id="GO:0005829">
    <property type="term" value="C:cytosol"/>
    <property type="evidence" value="ECO:0007669"/>
    <property type="project" value="TreeGrafter"/>
</dbReference>
<dbReference type="GO" id="GO:0000287">
    <property type="term" value="F:magnesium ion binding"/>
    <property type="evidence" value="ECO:0007669"/>
    <property type="project" value="InterPro"/>
</dbReference>
<dbReference type="GO" id="GO:0030145">
    <property type="term" value="F:manganese ion binding"/>
    <property type="evidence" value="ECO:0007669"/>
    <property type="project" value="UniProtKB-UniRule"/>
</dbReference>
<dbReference type="GO" id="GO:0008973">
    <property type="term" value="F:phosphopentomutase activity"/>
    <property type="evidence" value="ECO:0007669"/>
    <property type="project" value="UniProtKB-UniRule"/>
</dbReference>
<dbReference type="GO" id="GO:0006018">
    <property type="term" value="P:2-deoxyribose 1-phosphate catabolic process"/>
    <property type="evidence" value="ECO:0007669"/>
    <property type="project" value="UniProtKB-UniRule"/>
</dbReference>
<dbReference type="GO" id="GO:0006015">
    <property type="term" value="P:5-phosphoribose 1-diphosphate biosynthetic process"/>
    <property type="evidence" value="ECO:0007669"/>
    <property type="project" value="UniProtKB-UniPathway"/>
</dbReference>
<dbReference type="GO" id="GO:0043094">
    <property type="term" value="P:metabolic compound salvage"/>
    <property type="evidence" value="ECO:0007669"/>
    <property type="project" value="InterPro"/>
</dbReference>
<dbReference type="GO" id="GO:0009117">
    <property type="term" value="P:nucleotide metabolic process"/>
    <property type="evidence" value="ECO:0007669"/>
    <property type="project" value="InterPro"/>
</dbReference>
<dbReference type="CDD" id="cd16009">
    <property type="entry name" value="PPM"/>
    <property type="match status" value="1"/>
</dbReference>
<dbReference type="FunFam" id="3.30.70.1250:FF:000001">
    <property type="entry name" value="Phosphopentomutase"/>
    <property type="match status" value="1"/>
</dbReference>
<dbReference type="Gene3D" id="3.40.720.10">
    <property type="entry name" value="Alkaline Phosphatase, subunit A"/>
    <property type="match status" value="1"/>
</dbReference>
<dbReference type="Gene3D" id="3.30.70.1250">
    <property type="entry name" value="Phosphopentomutase"/>
    <property type="match status" value="1"/>
</dbReference>
<dbReference type="HAMAP" id="MF_00740">
    <property type="entry name" value="Phosphopentomut"/>
    <property type="match status" value="1"/>
</dbReference>
<dbReference type="InterPro" id="IPR017850">
    <property type="entry name" value="Alkaline_phosphatase_core_sf"/>
</dbReference>
<dbReference type="InterPro" id="IPR010045">
    <property type="entry name" value="DeoB"/>
</dbReference>
<dbReference type="InterPro" id="IPR006124">
    <property type="entry name" value="Metalloenzyme"/>
</dbReference>
<dbReference type="InterPro" id="IPR024052">
    <property type="entry name" value="Phosphopentomutase_DeoB_cap_sf"/>
</dbReference>
<dbReference type="NCBIfam" id="TIGR01696">
    <property type="entry name" value="deoB"/>
    <property type="match status" value="1"/>
</dbReference>
<dbReference type="NCBIfam" id="NF003766">
    <property type="entry name" value="PRK05362.1"/>
    <property type="match status" value="1"/>
</dbReference>
<dbReference type="PANTHER" id="PTHR21110">
    <property type="entry name" value="PHOSPHOPENTOMUTASE"/>
    <property type="match status" value="1"/>
</dbReference>
<dbReference type="PANTHER" id="PTHR21110:SF0">
    <property type="entry name" value="PHOSPHOPENTOMUTASE"/>
    <property type="match status" value="1"/>
</dbReference>
<dbReference type="Pfam" id="PF01676">
    <property type="entry name" value="Metalloenzyme"/>
    <property type="match status" value="1"/>
</dbReference>
<dbReference type="PIRSF" id="PIRSF001491">
    <property type="entry name" value="Ppentomutase"/>
    <property type="match status" value="1"/>
</dbReference>
<dbReference type="SUPFAM" id="SSF53649">
    <property type="entry name" value="Alkaline phosphatase-like"/>
    <property type="match status" value="1"/>
</dbReference>
<dbReference type="SUPFAM" id="SSF143856">
    <property type="entry name" value="DeoB insert domain-like"/>
    <property type="match status" value="1"/>
</dbReference>
<organism>
    <name type="scientific">Salmonella schwarzengrund (strain CVM19633)</name>
    <dbReference type="NCBI Taxonomy" id="439843"/>
    <lineage>
        <taxon>Bacteria</taxon>
        <taxon>Pseudomonadati</taxon>
        <taxon>Pseudomonadota</taxon>
        <taxon>Gammaproteobacteria</taxon>
        <taxon>Enterobacterales</taxon>
        <taxon>Enterobacteriaceae</taxon>
        <taxon>Salmonella</taxon>
    </lineage>
</organism>
<feature type="chain" id="PRO_1000133099" description="Phosphopentomutase">
    <location>
        <begin position="1"/>
        <end position="407"/>
    </location>
</feature>
<feature type="binding site" evidence="1">
    <location>
        <position position="10"/>
    </location>
    <ligand>
        <name>Mn(2+)</name>
        <dbReference type="ChEBI" id="CHEBI:29035"/>
        <label>1</label>
    </ligand>
</feature>
<feature type="binding site" evidence="1">
    <location>
        <position position="306"/>
    </location>
    <ligand>
        <name>Mn(2+)</name>
        <dbReference type="ChEBI" id="CHEBI:29035"/>
        <label>2</label>
    </ligand>
</feature>
<feature type="binding site" evidence="1">
    <location>
        <position position="311"/>
    </location>
    <ligand>
        <name>Mn(2+)</name>
        <dbReference type="ChEBI" id="CHEBI:29035"/>
        <label>2</label>
    </ligand>
</feature>
<feature type="binding site" evidence="1">
    <location>
        <position position="347"/>
    </location>
    <ligand>
        <name>Mn(2+)</name>
        <dbReference type="ChEBI" id="CHEBI:29035"/>
        <label>1</label>
    </ligand>
</feature>
<feature type="binding site" evidence="1">
    <location>
        <position position="348"/>
    </location>
    <ligand>
        <name>Mn(2+)</name>
        <dbReference type="ChEBI" id="CHEBI:29035"/>
        <label>1</label>
    </ligand>
</feature>
<feature type="binding site" evidence="1">
    <location>
        <position position="359"/>
    </location>
    <ligand>
        <name>Mn(2+)</name>
        <dbReference type="ChEBI" id="CHEBI:29035"/>
        <label>2</label>
    </ligand>
</feature>
<proteinExistence type="inferred from homology"/>
<sequence>MKRAFIMVLDSFGIGATEDADRFGDVGSDTLGHIAEACAKGEADNGRKGPLNLPNLTRLGLVKAHEGSTGKIAAGMDGNADVIGAYAWAHELSSGKDTPSGHWEIAGVPVLFDWGYFSDHENSFPQELLDKLVKRANLPGYLGNCHSSGTVILDQLGEEHMKTGKPIFYTSADSVFQIACHEETFGLDKLYELCEIAREELTEGGYNIGRVIARPFIGDKAGNFQRTGNRHDLAVEPPAPTVLQKLVDEKQGHVVSVGKIADIYANCGITKKVKATGLDALFDATLKEMKEAGDKTIVFTNFVDFDSSWGHRRDIAGYAAGLELFDRRLPELMELVGEDDILILTADHGCDPSWTGTDHTREHIPVLIYGPKVKPGSLGHRETFADIGQTLATYFGTSPMDYGKNML</sequence>
<comment type="function">
    <text evidence="1">Isomerase that catalyzes the conversion of deoxy-ribose 1-phosphate (dRib-1-P) and ribose 1-phosphate (Rib-1-P) to deoxy-ribose 5-phosphate (dRib-5-P) and ribose 5-phosphate (Rib-5-P), respectively.</text>
</comment>
<comment type="catalytic activity">
    <reaction evidence="1">
        <text>2-deoxy-alpha-D-ribose 1-phosphate = 2-deoxy-D-ribose 5-phosphate</text>
        <dbReference type="Rhea" id="RHEA:27658"/>
        <dbReference type="ChEBI" id="CHEBI:57259"/>
        <dbReference type="ChEBI" id="CHEBI:62877"/>
        <dbReference type="EC" id="5.4.2.7"/>
    </reaction>
</comment>
<comment type="catalytic activity">
    <reaction evidence="1">
        <text>alpha-D-ribose 1-phosphate = D-ribose 5-phosphate</text>
        <dbReference type="Rhea" id="RHEA:18793"/>
        <dbReference type="ChEBI" id="CHEBI:57720"/>
        <dbReference type="ChEBI" id="CHEBI:78346"/>
        <dbReference type="EC" id="5.4.2.7"/>
    </reaction>
</comment>
<comment type="cofactor">
    <cofactor evidence="1">
        <name>Mn(2+)</name>
        <dbReference type="ChEBI" id="CHEBI:29035"/>
    </cofactor>
    <text evidence="1">Binds 2 manganese ions.</text>
</comment>
<comment type="pathway">
    <text evidence="1">Carbohydrate degradation; 2-deoxy-D-ribose 1-phosphate degradation; D-glyceraldehyde 3-phosphate and acetaldehyde from 2-deoxy-alpha-D-ribose 1-phosphate: step 1/2.</text>
</comment>
<comment type="subcellular location">
    <subcellularLocation>
        <location evidence="1">Cytoplasm</location>
    </subcellularLocation>
</comment>
<comment type="similarity">
    <text evidence="1">Belongs to the phosphopentomutase family.</text>
</comment>
<keyword id="KW-0963">Cytoplasm</keyword>
<keyword id="KW-0413">Isomerase</keyword>
<keyword id="KW-0464">Manganese</keyword>
<keyword id="KW-0479">Metal-binding</keyword>
<reference key="1">
    <citation type="journal article" date="2011" name="J. Bacteriol.">
        <title>Comparative genomics of 28 Salmonella enterica isolates: evidence for CRISPR-mediated adaptive sublineage evolution.</title>
        <authorList>
            <person name="Fricke W.F."/>
            <person name="Mammel M.K."/>
            <person name="McDermott P.F."/>
            <person name="Tartera C."/>
            <person name="White D.G."/>
            <person name="Leclerc J.E."/>
            <person name="Ravel J."/>
            <person name="Cebula T.A."/>
        </authorList>
    </citation>
    <scope>NUCLEOTIDE SEQUENCE [LARGE SCALE GENOMIC DNA]</scope>
    <source>
        <strain>CVM19633</strain>
    </source>
</reference>
<evidence type="ECO:0000255" key="1">
    <source>
        <dbReference type="HAMAP-Rule" id="MF_00740"/>
    </source>
</evidence>
<protein>
    <recommendedName>
        <fullName evidence="1">Phosphopentomutase</fullName>
        <ecNumber evidence="1">5.4.2.7</ecNumber>
    </recommendedName>
    <alternativeName>
        <fullName evidence="1">Phosphodeoxyribomutase</fullName>
    </alternativeName>
</protein>
<name>DEOB_SALSV</name>
<gene>
    <name evidence="1" type="primary">deoB</name>
    <name type="ordered locus">SeSA_A4823</name>
</gene>